<keyword id="KW-0025">Alternative splicing</keyword>
<keyword id="KW-0325">Glycoprotein</keyword>
<keyword id="KW-0328">Glycosyltransferase</keyword>
<keyword id="KW-0333">Golgi apparatus</keyword>
<keyword id="KW-0472">Membrane</keyword>
<keyword id="KW-1185">Reference proteome</keyword>
<keyword id="KW-0735">Signal-anchor</keyword>
<keyword id="KW-0808">Transferase</keyword>
<keyword id="KW-0812">Transmembrane</keyword>
<keyword id="KW-1133">Transmembrane helix</keyword>
<sequence>MRLFHFLKFLTINNFSRYCLKIVKVHIIWITIICIIYFNWRFKKLDFMAIPYPPAVIKFNTSAKYLSSNLASSSQLGNNIFEIASLYGLSKHLNRTPLFFIENGYHKKMLDNLRKTMPRLMEKFRILNGSVPRSISETKFQRACCLHKSPWSLEKNRDEYLHLSGKYYQSWKYFPNMRNELIEFLNPTSIQIFGNLPISDDQNHVTCVHSRRGDFVEYLFYASDPKFMKNAVTFLNENEKVGSRNRKIVLFGDDLNFLETYFSDAVLSTDVGKNAEYYISQNPPIDDFLYSKNNCDVVLITAPRSTFGWWIGYFSKGNKVYYLDIKYTGDHIFESGGLIASDFYPSHWTPLKFASANSFTVVRS</sequence>
<protein>
    <recommendedName>
        <fullName evidence="5">Putative galactoside 2-alpha-L-fucosyltransferase svh-11</fullName>
        <ecNumber evidence="7">2.4.1.-</ecNumber>
    </recommendedName>
    <alternativeName>
        <fullName evidence="9">Suppressor of vhp-1 deletion lethality protein svh-11</fullName>
    </alternativeName>
</protein>
<gene>
    <name evidence="9" type="primary">svh-11</name>
    <name evidence="9" type="ORF">Y5H2B.1</name>
</gene>
<accession>Q966A0</accession>
<accession>A0A0M7RER3</accession>
<proteinExistence type="inferred from homology"/>
<reference evidence="8" key="1">
    <citation type="journal article" date="1998" name="Science">
        <title>Genome sequence of the nematode C. elegans: a platform for investigating biology.</title>
        <authorList>
            <consortium name="The C. elegans sequencing consortium"/>
        </authorList>
    </citation>
    <scope>NUCLEOTIDE SEQUENCE [LARGE SCALE GENOMIC DNA]</scope>
    <source>
        <strain evidence="8">Bristol N2</strain>
    </source>
</reference>
<reference evidence="6" key="2">
    <citation type="journal article" date="2019" name="Genetics">
        <title>N-Glycosylation of the Discoidin Domain Receptor Is Required for Axon Regeneration in Caenorhabditis elegans.</title>
        <authorList>
            <person name="Shimizu T."/>
            <person name="Kato Y."/>
            <person name="Sakai Y."/>
            <person name="Hisamoto N."/>
            <person name="Matsumoto K."/>
        </authorList>
    </citation>
    <scope>FUNCTION</scope>
</reference>
<name>SVH11_CAEEL</name>
<evidence type="ECO:0000250" key="1">
    <source>
        <dbReference type="UniProtKB" id="Q10981"/>
    </source>
</evidence>
<evidence type="ECO:0000255" key="2"/>
<evidence type="ECO:0000255" key="3">
    <source>
        <dbReference type="PROSITE-ProRule" id="PRU00498"/>
    </source>
</evidence>
<evidence type="ECO:0000269" key="4">
    <source>
    </source>
</evidence>
<evidence type="ECO:0000303" key="5">
    <source>
    </source>
</evidence>
<evidence type="ECO:0000305" key="6"/>
<evidence type="ECO:0000305" key="7">
    <source>
    </source>
</evidence>
<evidence type="ECO:0000312" key="8">
    <source>
        <dbReference type="Proteomes" id="UP000001940"/>
    </source>
</evidence>
<evidence type="ECO:0000312" key="9">
    <source>
        <dbReference type="WormBase" id="Y5H2B.1a"/>
    </source>
</evidence>
<evidence type="ECO:0000312" key="10">
    <source>
        <dbReference type="WormBase" id="Y5H2B.1b"/>
    </source>
</evidence>
<dbReference type="EC" id="2.4.1.-" evidence="7"/>
<dbReference type="EMBL" id="BX284605">
    <property type="protein sequence ID" value="CCD67431.1"/>
    <property type="molecule type" value="Genomic_DNA"/>
</dbReference>
<dbReference type="EMBL" id="BX284605">
    <property type="protein sequence ID" value="CUR30074.1"/>
    <property type="molecule type" value="Genomic_DNA"/>
</dbReference>
<dbReference type="RefSeq" id="NP_001303775.1">
    <molecule id="Q966A0-2"/>
    <property type="nucleotide sequence ID" value="NM_001316846.1"/>
</dbReference>
<dbReference type="RefSeq" id="NP_503601.1">
    <molecule id="Q966A0-1"/>
    <property type="nucleotide sequence ID" value="NM_071200.2"/>
</dbReference>
<dbReference type="FunCoup" id="Q966A0">
    <property type="interactions" value="1"/>
</dbReference>
<dbReference type="STRING" id="6239.Y5H2B.1a.1"/>
<dbReference type="CAZy" id="GT11">
    <property type="family name" value="Glycosyltransferase Family 11"/>
</dbReference>
<dbReference type="GlyCosmos" id="Q966A0">
    <property type="glycosylation" value="2 sites, No reported glycans"/>
</dbReference>
<dbReference type="PaxDb" id="6239-Y5H2B.1"/>
<dbReference type="EnsemblMetazoa" id="Y5H2B.1a.1">
    <molecule id="Q966A0-1"/>
    <property type="protein sequence ID" value="Y5H2B.1a.1"/>
    <property type="gene ID" value="WBGene00021164"/>
</dbReference>
<dbReference type="EnsemblMetazoa" id="Y5H2B.1b.1">
    <molecule id="Q966A0-2"/>
    <property type="protein sequence ID" value="Y5H2B.1b.1"/>
    <property type="gene ID" value="WBGene00021164"/>
</dbReference>
<dbReference type="GeneID" id="189361"/>
<dbReference type="KEGG" id="cel:CELE_Y5H2B.1"/>
<dbReference type="UCSC" id="Y5H2B.1">
    <molecule id="Q966A0-1"/>
    <property type="organism name" value="c. elegans"/>
</dbReference>
<dbReference type="AGR" id="WB:WBGene00021164"/>
<dbReference type="CTD" id="189361"/>
<dbReference type="WormBase" id="Y5H2B.1a">
    <molecule id="Q966A0-1"/>
    <property type="protein sequence ID" value="CE26220"/>
    <property type="gene ID" value="WBGene00021164"/>
    <property type="gene designation" value="svh-11"/>
</dbReference>
<dbReference type="WormBase" id="Y5H2B.1b">
    <molecule id="Q966A0-2"/>
    <property type="protein sequence ID" value="CE51117"/>
    <property type="gene ID" value="WBGene00021164"/>
    <property type="gene designation" value="svh-11"/>
</dbReference>
<dbReference type="eggNOG" id="ENOG502SVMQ">
    <property type="taxonomic scope" value="Eukaryota"/>
</dbReference>
<dbReference type="GeneTree" id="ENSGT00530000064380"/>
<dbReference type="HOGENOM" id="CLU_038305_0_0_1"/>
<dbReference type="InParanoid" id="Q966A0"/>
<dbReference type="OMA" id="MTHENEQ"/>
<dbReference type="OrthoDB" id="3226at2759"/>
<dbReference type="PhylomeDB" id="Q966A0"/>
<dbReference type="PRO" id="PR:Q966A0"/>
<dbReference type="Proteomes" id="UP000001940">
    <property type="component" value="Chromosome V"/>
</dbReference>
<dbReference type="Bgee" id="WBGene00021164">
    <property type="expression patterns" value="Expressed in anatomical system and 2 other cell types or tissues"/>
</dbReference>
<dbReference type="ExpressionAtlas" id="Q966A0">
    <property type="expression patterns" value="baseline"/>
</dbReference>
<dbReference type="GO" id="GO:0032580">
    <property type="term" value="C:Golgi cisterna membrane"/>
    <property type="evidence" value="ECO:0007669"/>
    <property type="project" value="UniProtKB-SubCell"/>
</dbReference>
<dbReference type="GO" id="GO:0008107">
    <property type="term" value="F:galactoside 2-alpha-L-fucosyltransferase activity"/>
    <property type="evidence" value="ECO:0007669"/>
    <property type="project" value="InterPro"/>
</dbReference>
<dbReference type="GO" id="GO:0005975">
    <property type="term" value="P:carbohydrate metabolic process"/>
    <property type="evidence" value="ECO:0007669"/>
    <property type="project" value="InterPro"/>
</dbReference>
<dbReference type="GO" id="GO:0043413">
    <property type="term" value="P:macromolecule glycosylation"/>
    <property type="evidence" value="ECO:0000318"/>
    <property type="project" value="GO_Central"/>
</dbReference>
<dbReference type="GO" id="GO:0048680">
    <property type="term" value="P:positive regulation of axon regeneration"/>
    <property type="evidence" value="ECO:0000315"/>
    <property type="project" value="UniProtKB"/>
</dbReference>
<dbReference type="CDD" id="cd11301">
    <property type="entry name" value="Fut1_Fut2_like"/>
    <property type="match status" value="1"/>
</dbReference>
<dbReference type="InterPro" id="IPR052501">
    <property type="entry name" value="Alpha-1-2_FucT"/>
</dbReference>
<dbReference type="InterPro" id="IPR002516">
    <property type="entry name" value="Glyco_trans_11"/>
</dbReference>
<dbReference type="PANTHER" id="PTHR22898:SF3">
    <property type="entry name" value="ALPHA-1,2-FUCOSYLTRANSFERASE-RELATED"/>
    <property type="match status" value="1"/>
</dbReference>
<dbReference type="PANTHER" id="PTHR22898">
    <property type="entry name" value="UNCHARACTERIZED GLYCOSOL TRANSFERASE-RELATED"/>
    <property type="match status" value="1"/>
</dbReference>
<dbReference type="Pfam" id="PF01531">
    <property type="entry name" value="Glyco_transf_11"/>
    <property type="match status" value="1"/>
</dbReference>
<organism evidence="8">
    <name type="scientific">Caenorhabditis elegans</name>
    <dbReference type="NCBI Taxonomy" id="6239"/>
    <lineage>
        <taxon>Eukaryota</taxon>
        <taxon>Metazoa</taxon>
        <taxon>Ecdysozoa</taxon>
        <taxon>Nematoda</taxon>
        <taxon>Chromadorea</taxon>
        <taxon>Rhabditida</taxon>
        <taxon>Rhabditina</taxon>
        <taxon>Rhabditomorpha</taxon>
        <taxon>Rhabditoidea</taxon>
        <taxon>Rhabditidae</taxon>
        <taxon>Peloderinae</taxon>
        <taxon>Caenorhabditis</taxon>
    </lineage>
</organism>
<feature type="chain" id="PRO_0000449893" description="Putative galactoside 2-alpha-L-fucosyltransferase svh-11">
    <location>
        <begin position="1"/>
        <end position="364"/>
    </location>
</feature>
<feature type="topological domain" description="Cytoplasmic" evidence="6">
    <location>
        <begin position="1"/>
        <end position="19"/>
    </location>
</feature>
<feature type="transmembrane region" description="Helical; Signal-anchor for type II membrane protein" evidence="2">
    <location>
        <begin position="20"/>
        <end position="42"/>
    </location>
</feature>
<feature type="topological domain" description="Lumenal" evidence="6">
    <location>
        <begin position="43"/>
        <end position="364"/>
    </location>
</feature>
<feature type="glycosylation site" description="N-linked (GlcNAc...) asparagine" evidence="3">
    <location>
        <position position="60"/>
    </location>
</feature>
<feature type="glycosylation site" description="N-linked (GlcNAc...) asparagine" evidence="3">
    <location>
        <position position="128"/>
    </location>
</feature>
<feature type="splice variant" id="VSP_060577" description="In isoform b." evidence="6">
    <original>APRSTFGWWIGYFSKGNKVYYLDIKYTGDHIFESGGLIASDFYPSHWTPLKFASANSFTVVRS</original>
    <variation>ETPKFQLPAQHSAGGLGIFRKETKFTIWILNTLGIIFLNLEVLLQVTSTHHTGRL</variation>
    <location>
        <begin position="302"/>
        <end position="364"/>
    </location>
</feature>
<comment type="function">
    <text evidence="1 4">Mediates the transfer of fucose to the terminal galactose on glycan chains of cell surface glycoproteins and glycolipids (By similarity). Required for axon regeneration after injury (PubMed:31371405).</text>
</comment>
<comment type="subcellular location">
    <subcellularLocation>
        <location evidence="6">Golgi apparatus</location>
        <location evidence="6">Golgi stack membrane</location>
        <topology evidence="6">Single-pass type II membrane protein</topology>
    </subcellularLocation>
</comment>
<comment type="alternative products">
    <event type="alternative splicing"/>
    <isoform>
        <id>Q966A0-1</id>
        <name evidence="9">a</name>
        <sequence type="displayed"/>
    </isoform>
    <isoform>
        <id>Q966A0-2</id>
        <name evidence="10">b</name>
        <sequence type="described" ref="VSP_060577"/>
    </isoform>
</comment>
<comment type="similarity">
    <text evidence="6">Belongs to the glycosyltransferase 11 family.</text>
</comment>